<organism>
    <name type="scientific">Corynebacterium glutamicum (strain ATCC 13032 / DSM 20300 / JCM 1318 / BCRC 11384 / CCUG 27702 / LMG 3730 / NBRC 12168 / NCIMB 10025 / NRRL B-2784 / 534)</name>
    <dbReference type="NCBI Taxonomy" id="196627"/>
    <lineage>
        <taxon>Bacteria</taxon>
        <taxon>Bacillati</taxon>
        <taxon>Actinomycetota</taxon>
        <taxon>Actinomycetes</taxon>
        <taxon>Mycobacteriales</taxon>
        <taxon>Corynebacteriaceae</taxon>
        <taxon>Corynebacterium</taxon>
    </lineage>
</organism>
<feature type="chain" id="PRO_0000102939" description="SsrA-binding protein">
    <location>
        <begin position="1"/>
        <end position="164"/>
    </location>
</feature>
<name>SSRP_CORGL</name>
<reference key="1">
    <citation type="journal article" date="2003" name="Appl. Microbiol. Biotechnol.">
        <title>The Corynebacterium glutamicum genome: features and impacts on biotechnological processes.</title>
        <authorList>
            <person name="Ikeda M."/>
            <person name="Nakagawa S."/>
        </authorList>
    </citation>
    <scope>NUCLEOTIDE SEQUENCE [LARGE SCALE GENOMIC DNA]</scope>
    <source>
        <strain>ATCC 13032 / DSM 20300 / JCM 1318 / BCRC 11384 / CCUG 27702 / LMG 3730 / NBRC 12168 / NCIMB 10025 / NRRL B-2784 / 534</strain>
    </source>
</reference>
<reference key="2">
    <citation type="journal article" date="2003" name="J. Biotechnol.">
        <title>The complete Corynebacterium glutamicum ATCC 13032 genome sequence and its impact on the production of L-aspartate-derived amino acids and vitamins.</title>
        <authorList>
            <person name="Kalinowski J."/>
            <person name="Bathe B."/>
            <person name="Bartels D."/>
            <person name="Bischoff N."/>
            <person name="Bott M."/>
            <person name="Burkovski A."/>
            <person name="Dusch N."/>
            <person name="Eggeling L."/>
            <person name="Eikmanns B.J."/>
            <person name="Gaigalat L."/>
            <person name="Goesmann A."/>
            <person name="Hartmann M."/>
            <person name="Huthmacher K."/>
            <person name="Kraemer R."/>
            <person name="Linke B."/>
            <person name="McHardy A.C."/>
            <person name="Meyer F."/>
            <person name="Moeckel B."/>
            <person name="Pfefferle W."/>
            <person name="Puehler A."/>
            <person name="Rey D.A."/>
            <person name="Rueckert C."/>
            <person name="Rupp O."/>
            <person name="Sahm H."/>
            <person name="Wendisch V.F."/>
            <person name="Wiegraebe I."/>
            <person name="Tauch A."/>
        </authorList>
    </citation>
    <scope>NUCLEOTIDE SEQUENCE [LARGE SCALE GENOMIC DNA]</scope>
    <source>
        <strain>ATCC 13032 / DSM 20300 / JCM 1318 / BCRC 11384 / CCUG 27702 / LMG 3730 / NBRC 12168 / NCIMB 10025 / NRRL B-2784 / 534</strain>
    </source>
</reference>
<dbReference type="EMBL" id="BA000036">
    <property type="protein sequence ID" value="BAB98197.1"/>
    <property type="molecule type" value="Genomic_DNA"/>
</dbReference>
<dbReference type="EMBL" id="BX927150">
    <property type="protein sequence ID" value="CAF19510.1"/>
    <property type="molecule type" value="Genomic_DNA"/>
</dbReference>
<dbReference type="RefSeq" id="NP_600033.1">
    <property type="nucleotide sequence ID" value="NC_003450.3"/>
</dbReference>
<dbReference type="RefSeq" id="WP_003858084.1">
    <property type="nucleotide sequence ID" value="NC_006958.1"/>
</dbReference>
<dbReference type="SMR" id="Q8NS75"/>
<dbReference type="STRING" id="196627.cg0916"/>
<dbReference type="GeneID" id="1018799"/>
<dbReference type="KEGG" id="cgb:cg0916"/>
<dbReference type="KEGG" id="cgl:Cgl0804"/>
<dbReference type="PATRIC" id="fig|196627.13.peg.786"/>
<dbReference type="eggNOG" id="COG0691">
    <property type="taxonomic scope" value="Bacteria"/>
</dbReference>
<dbReference type="HOGENOM" id="CLU_108953_2_1_11"/>
<dbReference type="OrthoDB" id="9805462at2"/>
<dbReference type="BioCyc" id="CORYNE:G18NG-10367-MONOMER"/>
<dbReference type="Proteomes" id="UP000000582">
    <property type="component" value="Chromosome"/>
</dbReference>
<dbReference type="Proteomes" id="UP000001009">
    <property type="component" value="Chromosome"/>
</dbReference>
<dbReference type="GO" id="GO:0005829">
    <property type="term" value="C:cytosol"/>
    <property type="evidence" value="ECO:0007669"/>
    <property type="project" value="TreeGrafter"/>
</dbReference>
<dbReference type="GO" id="GO:0003723">
    <property type="term" value="F:RNA binding"/>
    <property type="evidence" value="ECO:0007669"/>
    <property type="project" value="UniProtKB-UniRule"/>
</dbReference>
<dbReference type="GO" id="GO:0070929">
    <property type="term" value="P:trans-translation"/>
    <property type="evidence" value="ECO:0007669"/>
    <property type="project" value="UniProtKB-UniRule"/>
</dbReference>
<dbReference type="CDD" id="cd09294">
    <property type="entry name" value="SmpB"/>
    <property type="match status" value="1"/>
</dbReference>
<dbReference type="Gene3D" id="2.40.280.10">
    <property type="match status" value="1"/>
</dbReference>
<dbReference type="HAMAP" id="MF_00023">
    <property type="entry name" value="SmpB"/>
    <property type="match status" value="1"/>
</dbReference>
<dbReference type="InterPro" id="IPR023620">
    <property type="entry name" value="SmpB"/>
</dbReference>
<dbReference type="InterPro" id="IPR000037">
    <property type="entry name" value="SsrA-bd_prot"/>
</dbReference>
<dbReference type="InterPro" id="IPR020081">
    <property type="entry name" value="SsrA-bd_prot_CS"/>
</dbReference>
<dbReference type="NCBIfam" id="NF003843">
    <property type="entry name" value="PRK05422.1"/>
    <property type="match status" value="1"/>
</dbReference>
<dbReference type="NCBIfam" id="TIGR00086">
    <property type="entry name" value="smpB"/>
    <property type="match status" value="1"/>
</dbReference>
<dbReference type="PANTHER" id="PTHR30308:SF2">
    <property type="entry name" value="SSRA-BINDING PROTEIN"/>
    <property type="match status" value="1"/>
</dbReference>
<dbReference type="PANTHER" id="PTHR30308">
    <property type="entry name" value="TMRNA-BINDING COMPONENT OF TRANS-TRANSLATION TAGGING COMPLEX"/>
    <property type="match status" value="1"/>
</dbReference>
<dbReference type="Pfam" id="PF01668">
    <property type="entry name" value="SmpB"/>
    <property type="match status" value="1"/>
</dbReference>
<dbReference type="SUPFAM" id="SSF74982">
    <property type="entry name" value="Small protein B (SmpB)"/>
    <property type="match status" value="1"/>
</dbReference>
<dbReference type="PROSITE" id="PS01317">
    <property type="entry name" value="SSRP"/>
    <property type="match status" value="1"/>
</dbReference>
<comment type="function">
    <text evidence="1">Required for rescue of stalled ribosomes mediated by trans-translation. Binds to transfer-messenger RNA (tmRNA), required for stable association of tmRNA with ribosomes. tmRNA and SmpB together mimic tRNA shape, replacing the anticodon stem-loop with SmpB. tmRNA is encoded by the ssrA gene; the 2 termini fold to resemble tRNA(Ala) and it encodes a 'tag peptide', a short internal open reading frame. During trans-translation Ala-aminoacylated tmRNA acts like a tRNA, entering the A-site of stalled ribosomes, displacing the stalled mRNA. The ribosome then switches to translate the ORF on the tmRNA; the nascent peptide is terminated with the 'tag peptide' encoded by the tmRNA and targeted for degradation. The ribosome is freed to recommence translation, which seems to be the essential function of trans-translation.</text>
</comment>
<comment type="subcellular location">
    <subcellularLocation>
        <location evidence="1">Cytoplasm</location>
    </subcellularLocation>
    <text evidence="1">The tmRNA-SmpB complex associates with stalled 70S ribosomes.</text>
</comment>
<comment type="similarity">
    <text evidence="1">Belongs to the SmpB family.</text>
</comment>
<gene>
    <name evidence="1" type="primary">smpB</name>
    <name type="ordered locus">Cgl0804</name>
    <name type="ordered locus">cg0916</name>
</gene>
<evidence type="ECO:0000255" key="1">
    <source>
        <dbReference type="HAMAP-Rule" id="MF_00023"/>
    </source>
</evidence>
<accession>Q8NS75</accession>
<protein>
    <recommendedName>
        <fullName evidence="1">SsrA-binding protein</fullName>
    </recommendedName>
    <alternativeName>
        <fullName evidence="1">Small protein B</fullName>
    </alternativeName>
</protein>
<sequence length="164" mass="19005">MAKKKKKVDENNSVLATNRKARHDYHIIDTWEAGVVLLGTEIKSLREGKVSLVDSFATIDNGEIWLQHLHIPQYSMGSWTNHTPKRTRKLLLHRNEIDSLMGKVRDGNRTLVPLKLYLKNGRVKLELGLAQGKQDYDKRQDIKRRTEEREVTRELGRRIKGINA</sequence>
<keyword id="KW-0963">Cytoplasm</keyword>
<keyword id="KW-1185">Reference proteome</keyword>
<keyword id="KW-0694">RNA-binding</keyword>
<proteinExistence type="inferred from homology"/>